<reference key="1">
    <citation type="journal article" date="1995" name="J. Phycol.">
        <title>Molecular phylogenetic analysis of rbcL in the Prymnesiophyta.</title>
        <authorList>
            <person name="Fujiwara S."/>
            <person name="Sawada M."/>
            <person name="Someya J."/>
            <person name="Minaka N."/>
            <person name="Kawachi M."/>
            <person name="Inoue I."/>
        </authorList>
    </citation>
    <scope>NUCLEOTIDE SEQUENCE [GENOMIC DNA]</scope>
</reference>
<geneLocation type="chloroplast"/>
<comment type="function">
    <text evidence="1">RuBisCO catalyzes two reactions: the carboxylation of D-ribulose 1,5-bisphosphate, the primary event in carbon dioxide fixation, as well as the oxidative fragmentation of the pentose substrate in the photorespiration process. Both reactions occur simultaneously and in competition at the same active site (By similarity).</text>
</comment>
<comment type="catalytic activity">
    <reaction>
        <text>2 (2R)-3-phosphoglycerate + 2 H(+) = D-ribulose 1,5-bisphosphate + CO2 + H2O</text>
        <dbReference type="Rhea" id="RHEA:23124"/>
        <dbReference type="ChEBI" id="CHEBI:15377"/>
        <dbReference type="ChEBI" id="CHEBI:15378"/>
        <dbReference type="ChEBI" id="CHEBI:16526"/>
        <dbReference type="ChEBI" id="CHEBI:57870"/>
        <dbReference type="ChEBI" id="CHEBI:58272"/>
        <dbReference type="EC" id="4.1.1.39"/>
    </reaction>
</comment>
<comment type="catalytic activity">
    <reaction>
        <text>D-ribulose 1,5-bisphosphate + O2 = 2-phosphoglycolate + (2R)-3-phosphoglycerate + 2 H(+)</text>
        <dbReference type="Rhea" id="RHEA:36631"/>
        <dbReference type="ChEBI" id="CHEBI:15378"/>
        <dbReference type="ChEBI" id="CHEBI:15379"/>
        <dbReference type="ChEBI" id="CHEBI:57870"/>
        <dbReference type="ChEBI" id="CHEBI:58033"/>
        <dbReference type="ChEBI" id="CHEBI:58272"/>
    </reaction>
</comment>
<comment type="cofactor">
    <cofactor evidence="1">
        <name>Mg(2+)</name>
        <dbReference type="ChEBI" id="CHEBI:18420"/>
    </cofactor>
    <text evidence="1">Binds 1 Mg(2+) ion per subunit.</text>
</comment>
<comment type="subunit">
    <text evidence="1">Heterohexadecamer of 8 large chains and 8 small chains.</text>
</comment>
<comment type="subcellular location">
    <subcellularLocation>
        <location>Plastid</location>
        <location>Chloroplast</location>
    </subcellularLocation>
</comment>
<comment type="miscellaneous">
    <text evidence="1">The basic functional RuBisCO is composed of a large chain homodimer in a 'head-to-tail' conformation. In form I RuBisCO this homodimer is arranged in a barrel-like tetramer with the small subunits forming a tetrameric 'cap' on each end of the 'barrel' (By similarity).</text>
</comment>
<comment type="similarity">
    <text evidence="3">Belongs to the RuBisCO large chain family. Type I subfamily.</text>
</comment>
<name>RBL_CALSH</name>
<evidence type="ECO:0000250" key="1"/>
<evidence type="ECO:0000255" key="2">
    <source>
        <dbReference type="PROSITE-ProRule" id="PRU10114"/>
    </source>
</evidence>
<evidence type="ECO:0000305" key="3"/>
<organism>
    <name type="scientific">Calyptrosphaera sphaeroidea</name>
    <dbReference type="NCBI Taxonomy" id="35139"/>
    <lineage>
        <taxon>Eukaryota</taxon>
        <taxon>Haptista</taxon>
        <taxon>Haptophyta</taxon>
        <taxon>Prymnesiophyceae</taxon>
        <taxon>Coccosphaerales</taxon>
        <taxon>Calyptrosphaeraceae</taxon>
        <taxon>Calyptrosphaera</taxon>
    </lineage>
</organism>
<protein>
    <recommendedName>
        <fullName>Ribulose bisphosphate carboxylase large chain</fullName>
        <shortName>RuBisCO large subunit</shortName>
        <ecNumber>4.1.1.39</ecNumber>
    </recommendedName>
</protein>
<gene>
    <name type="primary">rbcL</name>
</gene>
<accession>P48687</accession>
<feature type="chain" id="PRO_0000062393" description="Ribulose bisphosphate carboxylase large chain">
    <location>
        <begin position="1" status="less than"/>
        <end position="459"/>
    </location>
</feature>
<feature type="active site" description="Proton acceptor" evidence="1">
    <location>
        <position position="150"/>
    </location>
</feature>
<feature type="active site" description="Proton acceptor" evidence="1">
    <location>
        <position position="268"/>
    </location>
</feature>
<feature type="binding site" description="in homodimeric partner" evidence="1">
    <location>
        <position position="98"/>
    </location>
    <ligand>
        <name>substrate</name>
    </ligand>
</feature>
<feature type="binding site" evidence="1">
    <location>
        <position position="148"/>
    </location>
    <ligand>
        <name>substrate</name>
    </ligand>
</feature>
<feature type="binding site" evidence="1">
    <location>
        <position position="152"/>
    </location>
    <ligand>
        <name>substrate</name>
    </ligand>
</feature>
<feature type="binding site" description="via carbamate group" evidence="2">
    <location>
        <position position="176"/>
    </location>
    <ligand>
        <name>Mg(2+)</name>
        <dbReference type="ChEBI" id="CHEBI:18420"/>
    </ligand>
</feature>
<feature type="binding site" evidence="2">
    <location>
        <position position="178"/>
    </location>
    <ligand>
        <name>Mg(2+)</name>
        <dbReference type="ChEBI" id="CHEBI:18420"/>
    </ligand>
</feature>
<feature type="binding site" evidence="2">
    <location>
        <position position="179"/>
    </location>
    <ligand>
        <name>Mg(2+)</name>
        <dbReference type="ChEBI" id="CHEBI:18420"/>
    </ligand>
</feature>
<feature type="binding site" evidence="1">
    <location>
        <position position="269"/>
    </location>
    <ligand>
        <name>substrate</name>
    </ligand>
</feature>
<feature type="binding site" evidence="1">
    <location>
        <position position="301"/>
    </location>
    <ligand>
        <name>substrate</name>
    </ligand>
</feature>
<feature type="binding site" evidence="1">
    <location>
        <position position="353"/>
    </location>
    <ligand>
        <name>substrate</name>
    </ligand>
</feature>
<feature type="site" description="Transition state stabilizer" evidence="1">
    <location>
        <position position="308"/>
    </location>
</feature>
<feature type="modified residue" description="N6-carboxylysine" evidence="2">
    <location>
        <position position="176"/>
    </location>
</feature>
<feature type="non-terminal residue">
    <location>
        <position position="1"/>
    </location>
</feature>
<dbReference type="EC" id="4.1.1.39"/>
<dbReference type="EMBL" id="D45842">
    <property type="protein sequence ID" value="BAA08276.1"/>
    <property type="molecule type" value="Genomic_DNA"/>
</dbReference>
<dbReference type="SMR" id="P48687"/>
<dbReference type="GO" id="GO:0009507">
    <property type="term" value="C:chloroplast"/>
    <property type="evidence" value="ECO:0007669"/>
    <property type="project" value="UniProtKB-SubCell"/>
</dbReference>
<dbReference type="GO" id="GO:0000287">
    <property type="term" value="F:magnesium ion binding"/>
    <property type="evidence" value="ECO:0007669"/>
    <property type="project" value="InterPro"/>
</dbReference>
<dbReference type="GO" id="GO:0004497">
    <property type="term" value="F:monooxygenase activity"/>
    <property type="evidence" value="ECO:0007669"/>
    <property type="project" value="UniProtKB-KW"/>
</dbReference>
<dbReference type="GO" id="GO:0016984">
    <property type="term" value="F:ribulose-bisphosphate carboxylase activity"/>
    <property type="evidence" value="ECO:0007669"/>
    <property type="project" value="UniProtKB-EC"/>
</dbReference>
<dbReference type="GO" id="GO:0019253">
    <property type="term" value="P:reductive pentose-phosphate cycle"/>
    <property type="evidence" value="ECO:0007669"/>
    <property type="project" value="UniProtKB-KW"/>
</dbReference>
<dbReference type="CDD" id="cd08212">
    <property type="entry name" value="RuBisCO_large_I"/>
    <property type="match status" value="1"/>
</dbReference>
<dbReference type="Gene3D" id="3.20.20.110">
    <property type="entry name" value="Ribulose bisphosphate carboxylase, large subunit, C-terminal domain"/>
    <property type="match status" value="1"/>
</dbReference>
<dbReference type="Gene3D" id="3.30.70.150">
    <property type="entry name" value="RuBisCO large subunit, N-terminal domain"/>
    <property type="match status" value="1"/>
</dbReference>
<dbReference type="InterPro" id="IPR033966">
    <property type="entry name" value="RuBisCO"/>
</dbReference>
<dbReference type="InterPro" id="IPR020878">
    <property type="entry name" value="RuBisCo_large_chain_AS"/>
</dbReference>
<dbReference type="InterPro" id="IPR000685">
    <property type="entry name" value="RuBisCO_lsu_C"/>
</dbReference>
<dbReference type="InterPro" id="IPR036376">
    <property type="entry name" value="RuBisCO_lsu_C_sf"/>
</dbReference>
<dbReference type="InterPro" id="IPR017443">
    <property type="entry name" value="RuBisCO_lsu_fd_N"/>
</dbReference>
<dbReference type="InterPro" id="IPR036422">
    <property type="entry name" value="RuBisCO_lsu_N_sf"/>
</dbReference>
<dbReference type="InterPro" id="IPR020888">
    <property type="entry name" value="RuBisCO_lsuI"/>
</dbReference>
<dbReference type="NCBIfam" id="NF003252">
    <property type="entry name" value="PRK04208.1"/>
    <property type="match status" value="1"/>
</dbReference>
<dbReference type="PANTHER" id="PTHR42704">
    <property type="entry name" value="RIBULOSE BISPHOSPHATE CARBOXYLASE"/>
    <property type="match status" value="1"/>
</dbReference>
<dbReference type="PANTHER" id="PTHR42704:SF17">
    <property type="entry name" value="RIBULOSE BISPHOSPHATE CARBOXYLASE LARGE CHAIN"/>
    <property type="match status" value="1"/>
</dbReference>
<dbReference type="Pfam" id="PF00016">
    <property type="entry name" value="RuBisCO_large"/>
    <property type="match status" value="1"/>
</dbReference>
<dbReference type="Pfam" id="PF02788">
    <property type="entry name" value="RuBisCO_large_N"/>
    <property type="match status" value="1"/>
</dbReference>
<dbReference type="SFLD" id="SFLDG01052">
    <property type="entry name" value="RuBisCO"/>
    <property type="match status" value="1"/>
</dbReference>
<dbReference type="SFLD" id="SFLDS00014">
    <property type="entry name" value="RuBisCO"/>
    <property type="match status" value="1"/>
</dbReference>
<dbReference type="SFLD" id="SFLDG00301">
    <property type="entry name" value="RuBisCO-like_proteins"/>
    <property type="match status" value="1"/>
</dbReference>
<dbReference type="SUPFAM" id="SSF51649">
    <property type="entry name" value="RuBisCo, C-terminal domain"/>
    <property type="match status" value="1"/>
</dbReference>
<dbReference type="SUPFAM" id="SSF54966">
    <property type="entry name" value="RuBisCO, large subunit, small (N-terminal) domain"/>
    <property type="match status" value="1"/>
</dbReference>
<dbReference type="PROSITE" id="PS00157">
    <property type="entry name" value="RUBISCO_LARGE"/>
    <property type="match status" value="1"/>
</dbReference>
<sequence length="459" mass="50552">DPEYAIKETDLLALFRCTPQPGVDPVEAAAALAGESSTATWTVVWTDLLTACDLYRAKAYRVDPVPSAADTYFCYIAYDIDLFEEGSLANLTASIIGNIFGFKAVKALRLEDMRMPYALLKTYQGPATGLVVERERLDKFGRPLLGATVKPKLGLSGKNYGRVVFEGLKGGLDFLKDDENINSQPFMRYRERFLYSMEGVNHAAAMTGEVKGHYLNTTGATMEDMYERADFAKELGSVIVMIDLVIGYTAIQSMAKWSRKTDMILHLHRAGNSTYSRQKTHGMNFRVICKWMRMSGVDHIHAGTVVGKLEGDPLMIKGFYNTLLDFKTDVNLPQGLFFAQDWASLRKCVPVASGGIHCGQMHQLINYLGDDVVLQFGGGTIGHPDGIQAGATANRVALEAMVIARNEGRDYISEGPQILRDAAKTCGPLQTALDLWKDITFNYASTDTADFVETPTANV</sequence>
<proteinExistence type="inferred from homology"/>
<keyword id="KW-0113">Calvin cycle</keyword>
<keyword id="KW-0120">Carbon dioxide fixation</keyword>
<keyword id="KW-0150">Chloroplast</keyword>
<keyword id="KW-0456">Lyase</keyword>
<keyword id="KW-0460">Magnesium</keyword>
<keyword id="KW-0479">Metal-binding</keyword>
<keyword id="KW-0503">Monooxygenase</keyword>
<keyword id="KW-0560">Oxidoreductase</keyword>
<keyword id="KW-0601">Photorespiration</keyword>
<keyword id="KW-0602">Photosynthesis</keyword>
<keyword id="KW-0934">Plastid</keyword>